<comment type="function">
    <text evidence="1">The heterodimer acts as both an ATP-dependent DNA helicase and an ATP-dependent, dual-direction single-stranded exonuclease. Recognizes the chi site generating a DNA molecule suitable for the initiation of homologous recombination. This subunit has 5' -&gt; 3' nuclease activity but not helicase activity.</text>
</comment>
<comment type="cofactor">
    <cofactor evidence="1">
        <name>Mg(2+)</name>
        <dbReference type="ChEBI" id="CHEBI:18420"/>
    </cofactor>
</comment>
<comment type="subunit">
    <text evidence="1">Heterodimer of AddA and RexB.</text>
</comment>
<comment type="miscellaneous">
    <text evidence="1">Despite having helicase-like domains, this subunit does not have helicase activity.</text>
</comment>
<comment type="similarity">
    <text evidence="1">Belongs to the helicase family. AddB/RexB type 2 subfamily.</text>
</comment>
<gene>
    <name evidence="1" type="primary">rexB</name>
    <name type="ordered locus">SAG0873</name>
</gene>
<accession>Q8E062</accession>
<evidence type="ECO:0000255" key="1">
    <source>
        <dbReference type="HAMAP-Rule" id="MF_01453"/>
    </source>
</evidence>
<name>ADDB_STRA5</name>
<proteinExistence type="inferred from homology"/>
<organism>
    <name type="scientific">Streptococcus agalactiae serotype V (strain ATCC BAA-611 / 2603 V/R)</name>
    <dbReference type="NCBI Taxonomy" id="208435"/>
    <lineage>
        <taxon>Bacteria</taxon>
        <taxon>Bacillati</taxon>
        <taxon>Bacillota</taxon>
        <taxon>Bacilli</taxon>
        <taxon>Lactobacillales</taxon>
        <taxon>Streptococcaceae</taxon>
        <taxon>Streptococcus</taxon>
    </lineage>
</organism>
<reference key="1">
    <citation type="journal article" date="2002" name="Proc. Natl. Acad. Sci. U.S.A.">
        <title>Complete genome sequence and comparative genomic analysis of an emerging human pathogen, serotype V Streptococcus agalactiae.</title>
        <authorList>
            <person name="Tettelin H."/>
            <person name="Masignani V."/>
            <person name="Cieslewicz M.J."/>
            <person name="Eisen J.A."/>
            <person name="Peterson S.N."/>
            <person name="Wessels M.R."/>
            <person name="Paulsen I.T."/>
            <person name="Nelson K.E."/>
            <person name="Margarit I."/>
            <person name="Read T.D."/>
            <person name="Madoff L.C."/>
            <person name="Wolf A.M."/>
            <person name="Beanan M.J."/>
            <person name="Brinkac L.M."/>
            <person name="Daugherty S.C."/>
            <person name="DeBoy R.T."/>
            <person name="Durkin A.S."/>
            <person name="Kolonay J.F."/>
            <person name="Madupu R."/>
            <person name="Lewis M.R."/>
            <person name="Radune D."/>
            <person name="Fedorova N.B."/>
            <person name="Scanlan D."/>
            <person name="Khouri H.M."/>
            <person name="Mulligan S."/>
            <person name="Carty H.A."/>
            <person name="Cline R.T."/>
            <person name="Van Aken S.E."/>
            <person name="Gill J."/>
            <person name="Scarselli M."/>
            <person name="Mora M."/>
            <person name="Iacobini E.T."/>
            <person name="Brettoni C."/>
            <person name="Galli G."/>
            <person name="Mariani M."/>
            <person name="Vegni F."/>
            <person name="Maione D."/>
            <person name="Rinaudo D."/>
            <person name="Rappuoli R."/>
            <person name="Telford J.L."/>
            <person name="Kasper D.L."/>
            <person name="Grandi G."/>
            <person name="Fraser C.M."/>
        </authorList>
    </citation>
    <scope>NUCLEOTIDE SEQUENCE [LARGE SCALE GENOMIC DNA]</scope>
    <source>
        <strain>ATCC BAA-611 / 2603 V/R</strain>
    </source>
</reference>
<dbReference type="EC" id="3.1.-.-" evidence="1"/>
<dbReference type="EMBL" id="AE009948">
    <property type="protein sequence ID" value="AAM99759.1"/>
    <property type="molecule type" value="Genomic_DNA"/>
</dbReference>
<dbReference type="RefSeq" id="NP_687887.1">
    <property type="nucleotide sequence ID" value="NC_004116.1"/>
</dbReference>
<dbReference type="RefSeq" id="WP_000772298.1">
    <property type="nucleotide sequence ID" value="NC_004116.1"/>
</dbReference>
<dbReference type="SMR" id="Q8E062"/>
<dbReference type="STRING" id="208435.SAG0873"/>
<dbReference type="KEGG" id="sag:SAG0873"/>
<dbReference type="PATRIC" id="fig|208435.3.peg.880"/>
<dbReference type="HOGENOM" id="CLU_007838_1_0_9"/>
<dbReference type="OrthoDB" id="9758506at2"/>
<dbReference type="Proteomes" id="UP000000821">
    <property type="component" value="Chromosome"/>
</dbReference>
<dbReference type="GO" id="GO:0008409">
    <property type="term" value="F:5'-3' exonuclease activity"/>
    <property type="evidence" value="ECO:0007669"/>
    <property type="project" value="UniProtKB-UniRule"/>
</dbReference>
<dbReference type="GO" id="GO:0005524">
    <property type="term" value="F:ATP binding"/>
    <property type="evidence" value="ECO:0007669"/>
    <property type="project" value="UniProtKB-UniRule"/>
</dbReference>
<dbReference type="GO" id="GO:0003690">
    <property type="term" value="F:double-stranded DNA binding"/>
    <property type="evidence" value="ECO:0007669"/>
    <property type="project" value="UniProtKB-UniRule"/>
</dbReference>
<dbReference type="GO" id="GO:0004386">
    <property type="term" value="F:helicase activity"/>
    <property type="evidence" value="ECO:0007669"/>
    <property type="project" value="UniProtKB-KW"/>
</dbReference>
<dbReference type="GO" id="GO:0016817">
    <property type="term" value="F:hydrolase activity, acting on acid anhydrides"/>
    <property type="evidence" value="ECO:0007669"/>
    <property type="project" value="InterPro"/>
</dbReference>
<dbReference type="GO" id="GO:0000724">
    <property type="term" value="P:double-strand break repair via homologous recombination"/>
    <property type="evidence" value="ECO:0007669"/>
    <property type="project" value="UniProtKB-UniRule"/>
</dbReference>
<dbReference type="Gene3D" id="3.90.320.10">
    <property type="match status" value="1"/>
</dbReference>
<dbReference type="Gene3D" id="3.40.50.300">
    <property type="entry name" value="P-loop containing nucleotide triphosphate hydrolases"/>
    <property type="match status" value="4"/>
</dbReference>
<dbReference type="HAMAP" id="MF_01453">
    <property type="entry name" value="AddB_type2"/>
    <property type="match status" value="1"/>
</dbReference>
<dbReference type="InterPro" id="IPR049035">
    <property type="entry name" value="ADDB_N"/>
</dbReference>
<dbReference type="InterPro" id="IPR014141">
    <property type="entry name" value="DNA_helicase_suRexB"/>
</dbReference>
<dbReference type="InterPro" id="IPR027417">
    <property type="entry name" value="P-loop_NTPase"/>
</dbReference>
<dbReference type="InterPro" id="IPR011604">
    <property type="entry name" value="PDDEXK-like_dom_sf"/>
</dbReference>
<dbReference type="InterPro" id="IPR038726">
    <property type="entry name" value="PDDEXK_AddAB-type"/>
</dbReference>
<dbReference type="InterPro" id="IPR011335">
    <property type="entry name" value="Restrct_endonuc-II-like"/>
</dbReference>
<dbReference type="NCBIfam" id="TIGR02774">
    <property type="entry name" value="rexB_recomb"/>
    <property type="match status" value="1"/>
</dbReference>
<dbReference type="PANTHER" id="PTHR30591">
    <property type="entry name" value="RECBCD ENZYME SUBUNIT RECC"/>
    <property type="match status" value="1"/>
</dbReference>
<dbReference type="PANTHER" id="PTHR30591:SF1">
    <property type="entry name" value="RECBCD ENZYME SUBUNIT RECC"/>
    <property type="match status" value="1"/>
</dbReference>
<dbReference type="Pfam" id="PF21445">
    <property type="entry name" value="ADDB_N"/>
    <property type="match status" value="1"/>
</dbReference>
<dbReference type="Pfam" id="PF12705">
    <property type="entry name" value="PDDEXK_1"/>
    <property type="match status" value="1"/>
</dbReference>
<dbReference type="SUPFAM" id="SSF52540">
    <property type="entry name" value="P-loop containing nucleoside triphosphate hydrolases"/>
    <property type="match status" value="1"/>
</dbReference>
<dbReference type="SUPFAM" id="SSF52980">
    <property type="entry name" value="Restriction endonuclease-like"/>
    <property type="match status" value="1"/>
</dbReference>
<feature type="chain" id="PRO_0000379389" description="ATP-dependent helicase/deoxyribonuclease subunit B">
    <location>
        <begin position="1"/>
        <end position="1077"/>
    </location>
</feature>
<protein>
    <recommendedName>
        <fullName evidence="1">ATP-dependent helicase/deoxyribonuclease subunit B</fullName>
        <ecNumber evidence="1">3.1.-.-</ecNumber>
    </recommendedName>
    <alternativeName>
        <fullName evidence="1">ATP-dependent helicase/nuclease subunit RexB</fullName>
    </alternativeName>
</protein>
<keyword id="KW-0067">ATP-binding</keyword>
<keyword id="KW-0227">DNA damage</keyword>
<keyword id="KW-0234">DNA repair</keyword>
<keyword id="KW-0238">DNA-binding</keyword>
<keyword id="KW-0269">Exonuclease</keyword>
<keyword id="KW-0347">Helicase</keyword>
<keyword id="KW-0378">Hydrolase</keyword>
<keyword id="KW-0540">Nuclease</keyword>
<keyword id="KW-0547">Nucleotide-binding</keyword>
<keyword id="KW-1185">Reference proteome</keyword>
<sequence>MKLLYTDINHDMTEILVNQAAHAAEAGWRIFYIAPNSLSFEKERAVLENLPQEASFAITITRFAQLARYFTLNQPNQKESLNDIGLAMIFYRALASFEDGQLKVFGRLKQDASFISQLVDLYKELQTANLSILELKYLHSPEKFEDLLAIFLVVSDLLREGEYDNQSKIAFFTEQVRSGQLDVDLKNTILIVDGFTRFSAEEEALIKSLSSRCQEIIIGAYASQKAYKANFTNGNIYSAGVDFLRYLATTFQTKPEFILSKWESKSGFEMISKNIEGKHDFTNSSHILDDTAKDCITIWECINQKDEVEHVARAIRQKLYQGYRYKDILVLLGDVDSYKLQLSKIFEQYDIPYYFGKAETMAAHPLVHFMDSLSRIKRYRFRAEDVLNLFKTGIYGEISQDDLDYFEAYISYADIKGPKKFFTDFVVGAKKFDLGRLNTIRQSLLTPLESFVKTKKQDGIKTLNQFMFFLTQVGLSDNLSRLVGQMSENEQEKHQEVWKTFTDILEQFQTIFGQEKLNLDEFLSLLNSGMMQAEYRMVPATVDVVTVKSYDLVEPHSNQFVYALGMTQSHFPKIAQNKSLISDIERQLINDANDTDGHFDIMTQENLKKNHFAALSLFNAAKQELVLTIPQLLNESEDQMSPYLVELRDIGVPFNHKGRQSLKEEADNIGNYKALLSRVVDLYRSAIDKEMTKEEQTFWSVAVRYLRRQLTSKGIEIPIITDSLDTVTVSSDVMTRRFPEDDPLKLSSSALTTFYNNQYKYFLQYVLGLEEQDSIHPDMRHHGTYLHRVFEILMKNQGIESFEEKLNSAINKTNQEDVFKSLYSEDAESRYSLEILEDIARATATILRQDSQMTVESEEERFELMIDNTIKINGIIDRIDRLSDGSLGVVDYKSSAQKFDIQKFYNGLSPQLVTYIDAISRDKEVEQKPPIFGAMYLHMQEPRQDLSKIKNLDDLVTKNHQALTYKGLFSEAEKEFLANGKYHLKDSLYSETEIAILQAHNQSLYKKASETIKSGKFLINPYTEDAKTVDGDQFKSITGFEADRHMARARALYKLPAKEKRQGFLTLMQQEEENDDL</sequence>